<comment type="function">
    <text>Interacts with SLP-76 to regulate NF-AT activation. Binds to tyrosine-phosphorylated shc.</text>
</comment>
<comment type="subunit">
    <text evidence="1 6 8 9 10">Interacts with phosphorylated LIME1 upon TCR activation (By similarity). Interacts with phosphorylated LAT and LAX1 upon TCR activation. Interacts with SHB. Interacts with PTPN23.</text>
</comment>
<comment type="interaction">
    <interactant intactId="EBI-740418">
        <id>O75791</id>
    </interactant>
    <interactant intactId="EBI-1536151">
        <id>O14672</id>
        <label>ADAM10</label>
    </interactant>
    <organismsDiffer>false</organismsDiffer>
    <experiments>3</experiments>
</comment>
<comment type="interaction">
    <interactant intactId="EBI-740418">
        <id>O75791</id>
    </interactant>
    <interactant intactId="EBI-297353">
        <id>P00533</id>
        <label>EGFR</label>
    </interactant>
    <organismsDiffer>false</organismsDiffer>
    <experiments>3</experiments>
</comment>
<comment type="interaction">
    <interactant intactId="EBI-740418">
        <id>O75791</id>
    </interactant>
    <interactant intactId="EBI-641062">
        <id>P04626</id>
        <label>ERBB2</label>
    </interactant>
    <organismsDiffer>false</organismsDiffer>
    <experiments>2</experiments>
</comment>
<comment type="interaction">
    <interactant intactId="EBI-740418">
        <id>O75791</id>
    </interactant>
    <interactant intactId="EBI-517684">
        <id>Q13480</id>
        <label>GAB1</label>
    </interactant>
    <organismsDiffer>false</organismsDiffer>
    <experiments>3</experiments>
</comment>
<comment type="interaction">
    <interactant intactId="EBI-740418">
        <id>O75791</id>
    </interactant>
    <interactant intactId="EBI-975200">
        <id>Q9UQC2</id>
        <label>GAB2</label>
    </interactant>
    <organismsDiffer>false</organismsDiffer>
    <experiments>5</experiments>
</comment>
<comment type="interaction">
    <interactant intactId="EBI-740418">
        <id>O75791</id>
    </interactant>
    <interactant intactId="EBI-3440103">
        <id>Q9H706</id>
        <label>GAREM1</label>
    </interactant>
    <organismsDiffer>false</organismsDiffer>
    <experiments>5</experiments>
</comment>
<comment type="interaction">
    <interactant intactId="EBI-740418">
        <id>O75791</id>
    </interactant>
    <interactant intactId="EBI-1379503">
        <id>P10721</id>
        <label>KIT</label>
    </interactant>
    <organismsDiffer>false</organismsDiffer>
    <experiments>2</experiments>
</comment>
<comment type="interaction">
    <interactant intactId="EBI-740418">
        <id>O75791</id>
    </interactant>
    <interactant intactId="EBI-10981970">
        <id>Q5T749</id>
        <label>KPRP</label>
    </interactant>
    <organismsDiffer>false</organismsDiffer>
    <experiments>3</experiments>
</comment>
<comment type="interaction">
    <interactant intactId="EBI-740418">
        <id>O75791</id>
    </interactant>
    <interactant intactId="EBI-346946">
        <id>Q13094</id>
        <label>LCP2</label>
    </interactant>
    <organismsDiffer>false</organismsDiffer>
    <experiments>49</experiments>
</comment>
<comment type="interaction">
    <interactant intactId="EBI-740418">
        <id>O75791</id>
    </interactant>
    <interactant intactId="EBI-739832">
        <id>Q8TBB1</id>
        <label>LNX1</label>
    </interactant>
    <organismsDiffer>false</organismsDiffer>
    <experiments>4</experiments>
</comment>
<comment type="interaction">
    <interactant intactId="EBI-740418">
        <id>O75791</id>
    </interactant>
    <interactant intactId="EBI-1757866">
        <id>P00540</id>
        <label>MOS</label>
    </interactant>
    <organismsDiffer>false</organismsDiffer>
    <experiments>3</experiments>
</comment>
<comment type="interaction">
    <interactant intactId="EBI-740418">
        <id>O75791</id>
    </interactant>
    <interactant intactId="EBI-750589">
        <id>P30039</id>
        <label>PBLD</label>
    </interactant>
    <organismsDiffer>false</organismsDiffer>
    <experiments>3</experiments>
</comment>
<comment type="interaction">
    <interactant intactId="EBI-740418">
        <id>O75791</id>
    </interactant>
    <interactant intactId="EBI-1383852">
        <id>P54646</id>
        <label>PRKAA2</label>
    </interactant>
    <organismsDiffer>false</organismsDiffer>
    <experiments>3</experiments>
</comment>
<comment type="interaction">
    <interactant intactId="EBI-740418">
        <id>O75791</id>
    </interactant>
    <interactant intactId="EBI-11986293">
        <id>P0CG20</id>
        <label>PRR35</label>
    </interactant>
    <organismsDiffer>false</organismsDiffer>
    <experiments>3</experiments>
</comment>
<comment type="interaction">
    <interactant intactId="EBI-740418">
        <id>O75791</id>
    </interactant>
    <interactant intactId="EBI-724478">
        <id>Q9H3S7</id>
        <label>PTPN23</label>
    </interactant>
    <organismsDiffer>false</organismsDiffer>
    <experiments>8</experiments>
</comment>
<comment type="interaction">
    <interactant intactId="EBI-740418">
        <id>O75791</id>
    </interactant>
    <interactant intactId="EBI-2105155">
        <id>Q8IY67</id>
        <label>RAVER1</label>
    </interactant>
    <organismsDiffer>false</organismsDiffer>
    <experiments>3</experiments>
</comment>
<comment type="interaction">
    <interactant intactId="EBI-740418">
        <id>O75791</id>
    </interactant>
    <interactant intactId="EBI-747035">
        <id>Q9H788</id>
        <label>SH2D4A</label>
    </interactant>
    <organismsDiffer>false</organismsDiffer>
    <experiments>5</experiments>
</comment>
<comment type="interaction">
    <interactant intactId="EBI-740418">
        <id>O75791</id>
    </interactant>
    <interactant intactId="EBI-742487">
        <id>O43597</id>
        <label>SPRY2</label>
    </interactant>
    <organismsDiffer>false</organismsDiffer>
    <experiments>3</experiments>
</comment>
<comment type="interaction">
    <interactant intactId="EBI-740418">
        <id>O75791</id>
    </interactant>
    <interactant intactId="EBI-396676">
        <id>O95630</id>
        <label>STAMBP</label>
    </interactant>
    <organismsDiffer>false</organismsDiffer>
    <experiments>6</experiments>
</comment>
<comment type="interaction">
    <interactant intactId="EBI-740418">
        <id>O75791</id>
    </interactant>
    <interactant intactId="EBI-10177272">
        <id>P15622-3</id>
        <label>ZNF250</label>
    </interactant>
    <organismsDiffer>false</organismsDiffer>
    <experiments>3</experiments>
</comment>
<comment type="interaction">
    <interactant intactId="EBI-740418">
        <id>O75791</id>
    </interactant>
    <interactant intactId="EBI-11993110">
        <id>Q9P2F9</id>
        <label>ZNF319</label>
    </interactant>
    <organismsDiffer>false</organismsDiffer>
    <experiments>3</experiments>
</comment>
<comment type="interaction">
    <interactant intactId="EBI-740418">
        <id>O75791</id>
    </interactant>
    <interactant intactId="EBI-10281938">
        <id>Q9Y5A6</id>
        <label>ZSCAN21</label>
    </interactant>
    <organismsDiffer>false</organismsDiffer>
    <experiments>6</experiments>
</comment>
<comment type="interaction">
    <interactant intactId="EBI-740418">
        <id>O75791</id>
    </interactant>
    <interactant intactId="EBI-9088990">
        <id>Q7Z783</id>
    </interactant>
    <organismsDiffer>false</organismsDiffer>
    <experiments>3</experiments>
</comment>
<comment type="interaction">
    <interactant intactId="EBI-740418">
        <id>O75791</id>
    </interactant>
    <interactant intactId="EBI-1633915">
        <id>Q08460</id>
        <label>Kcnma1</label>
    </interactant>
    <organismsDiffer>true</organismsDiffer>
    <experiments>3</experiments>
</comment>
<comment type="subcellular location">
    <subcellularLocation>
        <location evidence="10">Nucleus</location>
    </subcellularLocation>
    <subcellularLocation>
        <location evidence="10">Cytoplasm</location>
    </subcellularLocation>
    <subcellularLocation>
        <location evidence="10">Endosome</location>
    </subcellularLocation>
</comment>
<comment type="alternative products">
    <event type="alternative splicing"/>
    <isoform>
        <id>O75791-1</id>
        <name>1</name>
        <sequence type="displayed"/>
    </isoform>
    <isoform>
        <id>O75791-2</id>
        <name>2</name>
        <sequence type="described" ref="VSP_055234 VSP_055235"/>
    </isoform>
</comment>
<comment type="similarity">
    <text evidence="12">Belongs to the GRB2/sem-5/DRK family.</text>
</comment>
<keyword id="KW-0002">3D-structure</keyword>
<keyword id="KW-0007">Acetylation</keyword>
<keyword id="KW-0025">Alternative splicing</keyword>
<keyword id="KW-0963">Cytoplasm</keyword>
<keyword id="KW-0967">Endosome</keyword>
<keyword id="KW-0539">Nucleus</keyword>
<keyword id="KW-0597">Phosphoprotein</keyword>
<keyword id="KW-1267">Proteomics identification</keyword>
<keyword id="KW-1185">Reference proteome</keyword>
<keyword id="KW-0677">Repeat</keyword>
<keyword id="KW-0727">SH2 domain</keyword>
<keyword id="KW-0728">SH3 domain</keyword>
<reference key="1">
    <citation type="journal article" date="1998" name="Biochem. Biophys. Res. Commun.">
        <title>Molecular cloning and expression of human grap-2, a novel leukocyte-specific SH2- and SH3-containing adaptor-like protein that binds to gab-1.</title>
        <authorList>
            <person name="Qiu M."/>
            <person name="Hua S."/>
            <person name="Agrawal M."/>
            <person name="Li G."/>
            <person name="Cai J."/>
            <person name="Chan E."/>
            <person name="Zhou H."/>
            <person name="Luo Y."/>
            <person name="Liu M."/>
        </authorList>
    </citation>
    <scope>NUCLEOTIDE SEQUENCE [MRNA] (ISOFORM 1)</scope>
</reference>
<reference key="2">
    <citation type="journal article" date="1999" name="J. Exp. Med.">
        <title>GrpL, a Grb2-related adaptor protein, interacts with SLP-76 to regulate nuclear factor of activated T cell activation.</title>
        <authorList>
            <person name="Law C.-L."/>
            <person name="Ewings M.K."/>
            <person name="Chaudhary P.M."/>
            <person name="Solow S.A."/>
            <person name="Yun T.J."/>
            <person name="Marshall A.J."/>
            <person name="Hood L."/>
            <person name="Clark E.A."/>
        </authorList>
    </citation>
    <scope>NUCLEOTIDE SEQUENCE [MRNA] (ISOFORM 1)</scope>
</reference>
<reference key="3">
    <citation type="journal article" date="1999" name="J. Exp. Med.">
        <title>Grf40, A novel Grb2 family member, is involved in T cell signaling through interaction with SLP-76 and LAT.</title>
        <authorList>
            <person name="Asada H."/>
            <person name="Ishii N."/>
            <person name="Sasaki Y."/>
            <person name="Endo K."/>
            <person name="Kasai H."/>
            <person name="Tanaka N."/>
            <person name="Takeshita T."/>
            <person name="Tsuchiya S."/>
            <person name="Konno T."/>
            <person name="Sugamura K."/>
        </authorList>
    </citation>
    <scope>NUCLEOTIDE SEQUENCE [MRNA] (ISOFORM 1)</scope>
</reference>
<reference key="4">
    <citation type="journal article" date="2000" name="J. Immunol.">
        <title>GRID: a novel Grb-2-related adapter protein that interacts with the activated T cell costimulatory receptor CD28.</title>
        <authorList>
            <person name="Ellis J.H."/>
            <person name="Ashman C."/>
            <person name="Burden M.N."/>
            <person name="Kilpatrick K.E."/>
            <person name="Morse M.A."/>
            <person name="Hamblin P.A."/>
        </authorList>
    </citation>
    <scope>NUCLEOTIDE SEQUENCE [MRNA] (ISOFORM 1)</scope>
    <scope>VARIANT PHE-319</scope>
</reference>
<reference key="5">
    <citation type="journal article" date="2002" name="Gene">
        <title>Genomic organization and restricted expression of the human Mona/Gads gene suggests regulation by two specific promoters.</title>
        <authorList>
            <person name="Guyot B."/>
            <person name="Arnaud S."/>
            <person name="Phothirath P."/>
            <person name="Bourette R.P."/>
            <person name="Grasset M.F."/>
            <person name="Rigal D."/>
            <person name="Mouchiroud G."/>
        </authorList>
    </citation>
    <scope>NUCLEOTIDE SEQUENCE [MRNA] (ISOFORM 1)</scope>
</reference>
<reference key="6">
    <citation type="submission" date="1998-09" db="EMBL/GenBank/DDBJ databases">
        <authorList>
            <person name="Frearson J."/>
        </authorList>
    </citation>
    <scope>NUCLEOTIDE SEQUENCE [MRNA] (ISOFORM 1)</scope>
    <source>
        <tissue>Blood</tissue>
    </source>
</reference>
<reference key="7">
    <citation type="submission" date="1998-10" db="EMBL/GenBank/DDBJ databases">
        <title>Cloning of the human and mouse growth factor receptor binding protein like genes.</title>
        <authorList>
            <person name="Kedra D."/>
            <person name="Dumanski J.P."/>
        </authorList>
    </citation>
    <scope>NUCLEOTIDE SEQUENCE [MRNA] (ISOFORM 1)</scope>
</reference>
<reference key="8">
    <citation type="submission" date="1998-09" db="EMBL/GenBank/DDBJ databases">
        <title>GrbX, new recruited signaling gene having homology with Grb2.</title>
        <authorList>
            <person name="Teramoto T."/>
            <person name="Nagashima M."/>
            <person name="Terai S."/>
            <person name="Thorgeirsson S.S."/>
        </authorList>
    </citation>
    <scope>NUCLEOTIDE SEQUENCE [MRNA] (ISOFORM 1)</scope>
</reference>
<reference key="9">
    <citation type="journal article" date="2004" name="Genome Biol.">
        <title>A genome annotation-driven approach to cloning the human ORFeome.</title>
        <authorList>
            <person name="Collins J.E."/>
            <person name="Wright C.L."/>
            <person name="Edwards C.A."/>
            <person name="Davis M.P."/>
            <person name="Grinham J.A."/>
            <person name="Cole C.G."/>
            <person name="Goward M.E."/>
            <person name="Aguado B."/>
            <person name="Mallya M."/>
            <person name="Mokrab Y."/>
            <person name="Huckle E.J."/>
            <person name="Beare D.M."/>
            <person name="Dunham I."/>
        </authorList>
    </citation>
    <scope>NUCLEOTIDE SEQUENCE [LARGE SCALE MRNA] (ISOFORM 1)</scope>
</reference>
<reference key="10">
    <citation type="journal article" date="2004" name="Nat. Genet.">
        <title>Complete sequencing and characterization of 21,243 full-length human cDNAs.</title>
        <authorList>
            <person name="Ota T."/>
            <person name="Suzuki Y."/>
            <person name="Nishikawa T."/>
            <person name="Otsuki T."/>
            <person name="Sugiyama T."/>
            <person name="Irie R."/>
            <person name="Wakamatsu A."/>
            <person name="Hayashi K."/>
            <person name="Sato H."/>
            <person name="Nagai K."/>
            <person name="Kimura K."/>
            <person name="Makita H."/>
            <person name="Sekine M."/>
            <person name="Obayashi M."/>
            <person name="Nishi T."/>
            <person name="Shibahara T."/>
            <person name="Tanaka T."/>
            <person name="Ishii S."/>
            <person name="Yamamoto J."/>
            <person name="Saito K."/>
            <person name="Kawai Y."/>
            <person name="Isono Y."/>
            <person name="Nakamura Y."/>
            <person name="Nagahari K."/>
            <person name="Murakami K."/>
            <person name="Yasuda T."/>
            <person name="Iwayanagi T."/>
            <person name="Wagatsuma M."/>
            <person name="Shiratori A."/>
            <person name="Sudo H."/>
            <person name="Hosoiri T."/>
            <person name="Kaku Y."/>
            <person name="Kodaira H."/>
            <person name="Kondo H."/>
            <person name="Sugawara M."/>
            <person name="Takahashi M."/>
            <person name="Kanda K."/>
            <person name="Yokoi T."/>
            <person name="Furuya T."/>
            <person name="Kikkawa E."/>
            <person name="Omura Y."/>
            <person name="Abe K."/>
            <person name="Kamihara K."/>
            <person name="Katsuta N."/>
            <person name="Sato K."/>
            <person name="Tanikawa M."/>
            <person name="Yamazaki M."/>
            <person name="Ninomiya K."/>
            <person name="Ishibashi T."/>
            <person name="Yamashita H."/>
            <person name="Murakawa K."/>
            <person name="Fujimori K."/>
            <person name="Tanai H."/>
            <person name="Kimata M."/>
            <person name="Watanabe M."/>
            <person name="Hiraoka S."/>
            <person name="Chiba Y."/>
            <person name="Ishida S."/>
            <person name="Ono Y."/>
            <person name="Takiguchi S."/>
            <person name="Watanabe S."/>
            <person name="Yosida M."/>
            <person name="Hotuta T."/>
            <person name="Kusano J."/>
            <person name="Kanehori K."/>
            <person name="Takahashi-Fujii A."/>
            <person name="Hara H."/>
            <person name="Tanase T.-O."/>
            <person name="Nomura Y."/>
            <person name="Togiya S."/>
            <person name="Komai F."/>
            <person name="Hara R."/>
            <person name="Takeuchi K."/>
            <person name="Arita M."/>
            <person name="Imose N."/>
            <person name="Musashino K."/>
            <person name="Yuuki H."/>
            <person name="Oshima A."/>
            <person name="Sasaki N."/>
            <person name="Aotsuka S."/>
            <person name="Yoshikawa Y."/>
            <person name="Matsunawa H."/>
            <person name="Ichihara T."/>
            <person name="Shiohata N."/>
            <person name="Sano S."/>
            <person name="Moriya S."/>
            <person name="Momiyama H."/>
            <person name="Satoh N."/>
            <person name="Takami S."/>
            <person name="Terashima Y."/>
            <person name="Suzuki O."/>
            <person name="Nakagawa S."/>
            <person name="Senoh A."/>
            <person name="Mizoguchi H."/>
            <person name="Goto Y."/>
            <person name="Shimizu F."/>
            <person name="Wakebe H."/>
            <person name="Hishigaki H."/>
            <person name="Watanabe T."/>
            <person name="Sugiyama A."/>
            <person name="Takemoto M."/>
            <person name="Kawakami B."/>
            <person name="Yamazaki M."/>
            <person name="Watanabe K."/>
            <person name="Kumagai A."/>
            <person name="Itakura S."/>
            <person name="Fukuzumi Y."/>
            <person name="Fujimori Y."/>
            <person name="Komiyama M."/>
            <person name="Tashiro H."/>
            <person name="Tanigami A."/>
            <person name="Fujiwara T."/>
            <person name="Ono T."/>
            <person name="Yamada K."/>
            <person name="Fujii Y."/>
            <person name="Ozaki K."/>
            <person name="Hirao M."/>
            <person name="Ohmori Y."/>
            <person name="Kawabata A."/>
            <person name="Hikiji T."/>
            <person name="Kobatake N."/>
            <person name="Inagaki H."/>
            <person name="Ikema Y."/>
            <person name="Okamoto S."/>
            <person name="Okitani R."/>
            <person name="Kawakami T."/>
            <person name="Noguchi S."/>
            <person name="Itoh T."/>
            <person name="Shigeta K."/>
            <person name="Senba T."/>
            <person name="Matsumura K."/>
            <person name="Nakajima Y."/>
            <person name="Mizuno T."/>
            <person name="Morinaga M."/>
            <person name="Sasaki M."/>
            <person name="Togashi T."/>
            <person name="Oyama M."/>
            <person name="Hata H."/>
            <person name="Watanabe M."/>
            <person name="Komatsu T."/>
            <person name="Mizushima-Sugano J."/>
            <person name="Satoh T."/>
            <person name="Shirai Y."/>
            <person name="Takahashi Y."/>
            <person name="Nakagawa K."/>
            <person name="Okumura K."/>
            <person name="Nagase T."/>
            <person name="Nomura N."/>
            <person name="Kikuchi H."/>
            <person name="Masuho Y."/>
            <person name="Yamashita R."/>
            <person name="Nakai K."/>
            <person name="Yada T."/>
            <person name="Nakamura Y."/>
            <person name="Ohara O."/>
            <person name="Isogai T."/>
            <person name="Sugano S."/>
        </authorList>
    </citation>
    <scope>NUCLEOTIDE SEQUENCE [LARGE SCALE MRNA] (ISOFORM 2)</scope>
    <source>
        <tissue>Thymus</tissue>
    </source>
</reference>
<reference key="11">
    <citation type="journal article" date="1999" name="Nature">
        <title>The DNA sequence of human chromosome 22.</title>
        <authorList>
            <person name="Dunham I."/>
            <person name="Hunt A.R."/>
            <person name="Collins J.E."/>
            <person name="Bruskiewich R."/>
            <person name="Beare D.M."/>
            <person name="Clamp M."/>
            <person name="Smink L.J."/>
            <person name="Ainscough R."/>
            <person name="Almeida J.P."/>
            <person name="Babbage A.K."/>
            <person name="Bagguley C."/>
            <person name="Bailey J."/>
            <person name="Barlow K.F."/>
            <person name="Bates K.N."/>
            <person name="Beasley O.P."/>
            <person name="Bird C.P."/>
            <person name="Blakey S.E."/>
            <person name="Bridgeman A.M."/>
            <person name="Buck D."/>
            <person name="Burgess J."/>
            <person name="Burrill W.D."/>
            <person name="Burton J."/>
            <person name="Carder C."/>
            <person name="Carter N.P."/>
            <person name="Chen Y."/>
            <person name="Clark G."/>
            <person name="Clegg S.M."/>
            <person name="Cobley V.E."/>
            <person name="Cole C.G."/>
            <person name="Collier R.E."/>
            <person name="Connor R."/>
            <person name="Conroy D."/>
            <person name="Corby N.R."/>
            <person name="Coville G.J."/>
            <person name="Cox A.V."/>
            <person name="Davis J."/>
            <person name="Dawson E."/>
            <person name="Dhami P.D."/>
            <person name="Dockree C."/>
            <person name="Dodsworth S.J."/>
            <person name="Durbin R.M."/>
            <person name="Ellington A.G."/>
            <person name="Evans K.L."/>
            <person name="Fey J.M."/>
            <person name="Fleming K."/>
            <person name="French L."/>
            <person name="Garner A.A."/>
            <person name="Gilbert J.G.R."/>
            <person name="Goward M.E."/>
            <person name="Grafham D.V."/>
            <person name="Griffiths M.N.D."/>
            <person name="Hall C."/>
            <person name="Hall R.E."/>
            <person name="Hall-Tamlyn G."/>
            <person name="Heathcott R.W."/>
            <person name="Ho S."/>
            <person name="Holmes S."/>
            <person name="Hunt S.E."/>
            <person name="Jones M.C."/>
            <person name="Kershaw J."/>
            <person name="Kimberley A.M."/>
            <person name="King A."/>
            <person name="Laird G.K."/>
            <person name="Langford C.F."/>
            <person name="Leversha M.A."/>
            <person name="Lloyd C."/>
            <person name="Lloyd D.M."/>
            <person name="Martyn I.D."/>
            <person name="Mashreghi-Mohammadi M."/>
            <person name="Matthews L.H."/>
            <person name="Mccann O.T."/>
            <person name="Mcclay J."/>
            <person name="Mclaren S."/>
            <person name="McMurray A.A."/>
            <person name="Milne S.A."/>
            <person name="Mortimore B.J."/>
            <person name="Odell C.N."/>
            <person name="Pavitt R."/>
            <person name="Pearce A.V."/>
            <person name="Pearson D."/>
            <person name="Phillimore B.J.C.T."/>
            <person name="Phillips S.H."/>
            <person name="Plumb R.W."/>
            <person name="Ramsay H."/>
            <person name="Ramsey Y."/>
            <person name="Rogers L."/>
            <person name="Ross M.T."/>
            <person name="Scott C.E."/>
            <person name="Sehra H.K."/>
            <person name="Skuce C.D."/>
            <person name="Smalley S."/>
            <person name="Smith M.L."/>
            <person name="Soderlund C."/>
            <person name="Spragon L."/>
            <person name="Steward C.A."/>
            <person name="Sulston J.E."/>
            <person name="Swann R.M."/>
            <person name="Vaudin M."/>
            <person name="Wall M."/>
            <person name="Wallis J.M."/>
            <person name="Whiteley M.N."/>
            <person name="Willey D.L."/>
            <person name="Williams L."/>
            <person name="Williams S.A."/>
            <person name="Williamson H."/>
            <person name="Wilmer T.E."/>
            <person name="Wilming L."/>
            <person name="Wright C.L."/>
            <person name="Hubbard T."/>
            <person name="Bentley D.R."/>
            <person name="Beck S."/>
            <person name="Rogers J."/>
            <person name="Shimizu N."/>
            <person name="Minoshima S."/>
            <person name="Kawasaki K."/>
            <person name="Sasaki T."/>
            <person name="Asakawa S."/>
            <person name="Kudoh J."/>
            <person name="Shintani A."/>
            <person name="Shibuya K."/>
            <person name="Yoshizaki Y."/>
            <person name="Aoki N."/>
            <person name="Mitsuyama S."/>
            <person name="Roe B.A."/>
            <person name="Chen F."/>
            <person name="Chu L."/>
            <person name="Crabtree J."/>
            <person name="Deschamps S."/>
            <person name="Do A."/>
            <person name="Do T."/>
            <person name="Dorman A."/>
            <person name="Fang F."/>
            <person name="Fu Y."/>
            <person name="Hu P."/>
            <person name="Hua A."/>
            <person name="Kenton S."/>
            <person name="Lai H."/>
            <person name="Lao H.I."/>
            <person name="Lewis J."/>
            <person name="Lewis S."/>
            <person name="Lin S.-P."/>
            <person name="Loh P."/>
            <person name="Malaj E."/>
            <person name="Nguyen T."/>
            <person name="Pan H."/>
            <person name="Phan S."/>
            <person name="Qi S."/>
            <person name="Qian Y."/>
            <person name="Ray L."/>
            <person name="Ren Q."/>
            <person name="Shaull S."/>
            <person name="Sloan D."/>
            <person name="Song L."/>
            <person name="Wang Q."/>
            <person name="Wang Y."/>
            <person name="Wang Z."/>
            <person name="White J."/>
            <person name="Willingham D."/>
            <person name="Wu H."/>
            <person name="Yao Z."/>
            <person name="Zhan M."/>
            <person name="Zhang G."/>
            <person name="Chissoe S."/>
            <person name="Murray J."/>
            <person name="Miller N."/>
            <person name="Minx P."/>
            <person name="Fulton R."/>
            <person name="Johnson D."/>
            <person name="Bemis G."/>
            <person name="Bentley D."/>
            <person name="Bradshaw H."/>
            <person name="Bourne S."/>
            <person name="Cordes M."/>
            <person name="Du Z."/>
            <person name="Fulton L."/>
            <person name="Goela D."/>
            <person name="Graves T."/>
            <person name="Hawkins J."/>
            <person name="Hinds K."/>
            <person name="Kemp K."/>
            <person name="Latreille P."/>
            <person name="Layman D."/>
            <person name="Ozersky P."/>
            <person name="Rohlfing T."/>
            <person name="Scheet P."/>
            <person name="Walker C."/>
            <person name="Wamsley A."/>
            <person name="Wohldmann P."/>
            <person name="Pepin K."/>
            <person name="Nelson J."/>
            <person name="Korf I."/>
            <person name="Bedell J.A."/>
            <person name="Hillier L.W."/>
            <person name="Mardis E."/>
            <person name="Waterston R."/>
            <person name="Wilson R."/>
            <person name="Emanuel B.S."/>
            <person name="Shaikh T."/>
            <person name="Kurahashi H."/>
            <person name="Saitta S."/>
            <person name="Budarf M.L."/>
            <person name="McDermid H.E."/>
            <person name="Johnson A."/>
            <person name="Wong A.C.C."/>
            <person name="Morrow B.E."/>
            <person name="Edelmann L."/>
            <person name="Kim U.J."/>
            <person name="Shizuya H."/>
            <person name="Simon M.I."/>
            <person name="Dumanski J.P."/>
            <person name="Peyrard M."/>
            <person name="Kedra D."/>
            <person name="Seroussi E."/>
            <person name="Fransson I."/>
            <person name="Tapia I."/>
            <person name="Bruder C.E."/>
            <person name="O'Brien K.P."/>
            <person name="Wilkinson P."/>
            <person name="Bodenteich A."/>
            <person name="Hartman K."/>
            <person name="Hu X."/>
            <person name="Khan A.S."/>
            <person name="Lane L."/>
            <person name="Tilahun Y."/>
            <person name="Wright H."/>
        </authorList>
    </citation>
    <scope>NUCLEOTIDE SEQUENCE [LARGE SCALE GENOMIC DNA]</scope>
</reference>
<reference key="12">
    <citation type="journal article" date="2004" name="Genome Res.">
        <title>The status, quality, and expansion of the NIH full-length cDNA project: the Mammalian Gene Collection (MGC).</title>
        <authorList>
            <consortium name="The MGC Project Team"/>
        </authorList>
    </citation>
    <scope>NUCLEOTIDE SEQUENCE [LARGE SCALE MRNA] (ISOFORM 1)</scope>
    <source>
        <tissue>Lung</tissue>
        <tissue>Spleen</tissue>
    </source>
</reference>
<reference key="13">
    <citation type="journal article" date="2000" name="J. Biol. Chem.">
        <title>Association of Grb2, Gads, and phospholipase C-gamma 1 with phosphorylated LAT tyrosine residues. Effect of LAT tyrosine mutations on T cell antigen receptor-mediated signaling.</title>
        <authorList>
            <person name="Zhang W."/>
            <person name="Trible R.P."/>
            <person name="Zhu M."/>
            <person name="Liu S.K."/>
            <person name="McGlade C.J."/>
            <person name="Samelson L.E."/>
        </authorList>
    </citation>
    <scope>INTERACTION WITH LAT</scope>
</reference>
<reference key="14">
    <citation type="journal article" date="2002" name="Eur. J. Biochem.">
        <title>Shb links SLP-76 and Vav with the CD3 complex in Jurkat T cells.</title>
        <authorList>
            <person name="Lindholm C.K."/>
            <person name="Henriksson M.L."/>
            <person name="Hallberg B."/>
            <person name="Welsh M."/>
        </authorList>
    </citation>
    <scope>INTERACTION WITH SHB</scope>
</reference>
<reference key="15">
    <citation type="journal article" date="2002" name="J. Biol. Chem.">
        <title>Molecular cloning of a novel gene encoding a membrane-associated adaptor protein (LAX) in lymphocyte signaling.</title>
        <authorList>
            <person name="Zhu M."/>
            <person name="Janssen E."/>
            <person name="Leung K."/>
            <person name="Zhang W."/>
        </authorList>
    </citation>
    <scope>INTERACTION WITH LAX1</scope>
</reference>
<reference key="16">
    <citation type="journal article" date="2003" name="Proc. Natl. Acad. Sci. U.S.A.">
        <title>Profiling of tyrosine phosphorylation pathways in human cells using mass spectrometry.</title>
        <authorList>
            <person name="Salomon A.R."/>
            <person name="Ficarro S.B."/>
            <person name="Brill L.M."/>
            <person name="Brinker A."/>
            <person name="Phung Q.T."/>
            <person name="Ericson C."/>
            <person name="Sauer K."/>
            <person name="Brock A."/>
            <person name="Horn D.M."/>
            <person name="Schultz P.G."/>
            <person name="Peters E.C."/>
        </authorList>
    </citation>
    <scope>PHOSPHORYLATION [LARGE SCALE ANALYSIS] AT THR-262</scope>
    <scope>IDENTIFICATION BY MASS SPECTROMETRY [LARGE SCALE ANALYSIS]</scope>
</reference>
<reference key="17">
    <citation type="journal article" date="2004" name="Anal. Chem.">
        <title>Robust phosphoproteomic profiling of tyrosine phosphorylation sites from human T cells using immobilized metal affinity chromatography and tandem mass spectrometry.</title>
        <authorList>
            <person name="Brill L.M."/>
            <person name="Salomon A.R."/>
            <person name="Ficarro S.B."/>
            <person name="Mukherji M."/>
            <person name="Stettler-Gill M."/>
            <person name="Peters E.C."/>
        </authorList>
    </citation>
    <scope>PHOSPHORYLATION [LARGE SCALE ANALYSIS] AT TYR-45 AND THR-262</scope>
    <scope>IDENTIFICATION BY MASS SPECTROMETRY [LARGE SCALE ANALYSIS]</scope>
    <source>
        <tissue>Leukemic T-cell</tissue>
    </source>
</reference>
<reference key="18">
    <citation type="journal article" date="2008" name="J. Proteome Res.">
        <title>Phosphoproteome of resting human platelets.</title>
        <authorList>
            <person name="Zahedi R.P."/>
            <person name="Lewandrowski U."/>
            <person name="Wiesner J."/>
            <person name="Wortelkamp S."/>
            <person name="Moebius J."/>
            <person name="Schuetz C."/>
            <person name="Walter U."/>
            <person name="Gambaryan S."/>
            <person name="Sickmann A."/>
        </authorList>
    </citation>
    <scope>PHOSPHORYLATION [LARGE SCALE ANALYSIS] AT THR-262</scope>
    <scope>IDENTIFICATION BY MASS SPECTROMETRY [LARGE SCALE ANALYSIS]</scope>
    <source>
        <tissue>Platelet</tissue>
    </source>
</reference>
<reference key="19">
    <citation type="journal article" date="2009" name="Sci. Signal.">
        <title>Quantitative phosphoproteomic analysis of T cell receptor signaling reveals system-wide modulation of protein-protein interactions.</title>
        <authorList>
            <person name="Mayya V."/>
            <person name="Lundgren D.H."/>
            <person name="Hwang S.-I."/>
            <person name="Rezaul K."/>
            <person name="Wu L."/>
            <person name="Eng J.K."/>
            <person name="Rodionov V."/>
            <person name="Han D.K."/>
        </authorList>
    </citation>
    <scope>PHOSPHORYLATION [LARGE SCALE ANALYSIS] AT TYR-45</scope>
    <scope>IDENTIFICATION BY MASS SPECTROMETRY [LARGE SCALE ANALYSIS]</scope>
    <source>
        <tissue>Leukemic T-cell</tissue>
    </source>
</reference>
<reference key="20">
    <citation type="journal article" date="2009" name="Science">
        <title>Lysine acetylation targets protein complexes and co-regulates major cellular functions.</title>
        <authorList>
            <person name="Choudhary C."/>
            <person name="Kumar C."/>
            <person name="Gnad F."/>
            <person name="Nielsen M.L."/>
            <person name="Rehman M."/>
            <person name="Walther T.C."/>
            <person name="Olsen J.V."/>
            <person name="Mann M."/>
        </authorList>
    </citation>
    <scope>ACETYLATION [LARGE SCALE ANALYSIS] AT LYS-106</scope>
    <scope>IDENTIFICATION BY MASS SPECTROMETRY [LARGE SCALE ANALYSIS]</scope>
</reference>
<reference key="21">
    <citation type="journal article" date="2010" name="PLoS ONE">
        <title>Histidine domain-protein tyrosine phosphatase interacts with Grb2 and GrpL.</title>
        <authorList>
            <person name="Tanase C.A."/>
        </authorList>
    </citation>
    <scope>INTERACTION WITH PTPN23</scope>
    <scope>SUBCELLULAR LOCATION</scope>
</reference>
<reference key="22">
    <citation type="journal article" date="2013" name="J. Proteome Res.">
        <title>Toward a comprehensive characterization of a human cancer cell phosphoproteome.</title>
        <authorList>
            <person name="Zhou H."/>
            <person name="Di Palma S."/>
            <person name="Preisinger C."/>
            <person name="Peng M."/>
            <person name="Polat A.N."/>
            <person name="Heck A.J."/>
            <person name="Mohammed S."/>
        </authorList>
    </citation>
    <scope>PHOSPHORYLATION [LARGE SCALE ANALYSIS] AT THR-262</scope>
    <scope>IDENTIFICATION BY MASS SPECTROMETRY [LARGE SCALE ANALYSIS]</scope>
    <source>
        <tissue>Erythroleukemia</tissue>
    </source>
</reference>
<reference key="23">
    <citation type="journal article" date="2014" name="J. Proteomics">
        <title>An enzyme assisted RP-RPLC approach for in-depth analysis of human liver phosphoproteome.</title>
        <authorList>
            <person name="Bian Y."/>
            <person name="Song C."/>
            <person name="Cheng K."/>
            <person name="Dong M."/>
            <person name="Wang F."/>
            <person name="Huang J."/>
            <person name="Sun D."/>
            <person name="Wang L."/>
            <person name="Ye M."/>
            <person name="Zou H."/>
        </authorList>
    </citation>
    <scope>PHOSPHORYLATION [LARGE SCALE ANALYSIS] AT THR-262</scope>
    <scope>IDENTIFICATION BY MASS SPECTROMETRY [LARGE SCALE ANALYSIS]</scope>
    <source>
        <tissue>Liver</tissue>
    </source>
</reference>
<sequence length="330" mass="37909">MEAVAKFDFTASGEDELSFHTGDVLKILSNQEEWFKAELGSQEGYVPKNFIDIQFPKWFHEGLSRHQAENLLMGKEVGFFIIRASQSSPGDFSISVRHEDDVQHFKVMRDNKGNYFLWTEKFPSLNKLVDYYRTNSISRQKQIFLRDRTREDQGHRGNSLDRRSQGGPHLSGAVGEEIRPSMNRKLSDHPPTLPLQQHQHQPQPPQYAPAPQQLQQPPQQRYLQHHHFHQERRGGSLDINDGHCGTGLGSEMNAALMHRRHTDPVQLQAAGRVRWARALYDFEALEDDELGFHSGEVVEVLDSSNPSWWTGRLHNKLGLFPANYVAPMTR</sequence>
<proteinExistence type="evidence at protein level"/>
<feature type="chain" id="PRO_0000088208" description="GRB2-related adapter protein 2">
    <location>
        <begin position="1"/>
        <end position="330"/>
    </location>
</feature>
<feature type="domain" description="SH3 1" evidence="4">
    <location>
        <begin position="1"/>
        <end position="56"/>
    </location>
</feature>
<feature type="domain" description="SH2" evidence="3">
    <location>
        <begin position="58"/>
        <end position="149"/>
    </location>
</feature>
<feature type="domain" description="SH3 2" evidence="4">
    <location>
        <begin position="271"/>
        <end position="330"/>
    </location>
</feature>
<feature type="region of interest" description="Disordered" evidence="5">
    <location>
        <begin position="143"/>
        <end position="244"/>
    </location>
</feature>
<feature type="compositionally biased region" description="Basic and acidic residues" evidence="5">
    <location>
        <begin position="144"/>
        <end position="164"/>
    </location>
</feature>
<feature type="compositionally biased region" description="Low complexity" evidence="5">
    <location>
        <begin position="209"/>
        <end position="222"/>
    </location>
</feature>
<feature type="modified residue" description="Phosphotyrosine" evidence="14 17">
    <location>
        <position position="45"/>
    </location>
</feature>
<feature type="modified residue" description="N6-acetyllysine" evidence="16">
    <location>
        <position position="106"/>
    </location>
</feature>
<feature type="modified residue" description="Phosphoserine" evidence="2">
    <location>
        <position position="187"/>
    </location>
</feature>
<feature type="modified residue" description="Phosphoserine" evidence="2">
    <location>
        <position position="236"/>
    </location>
</feature>
<feature type="modified residue" description="Phosphothreonine" evidence="13 14 15 18 19">
    <location>
        <position position="262"/>
    </location>
</feature>
<feature type="splice variant" id="VSP_055234" description="In isoform 2." evidence="11">
    <original>MEAVAKFDFTASGEDELSFHTGDVLKILSNQEEWFKAEL</original>
    <variation>MVSRRPLSTPGRELTHGQGGWLLHHPGQPELPRGLLHLC</variation>
    <location>
        <begin position="1"/>
        <end position="39"/>
    </location>
</feature>
<feature type="splice variant" id="VSP_055235" description="In isoform 2." evidence="11">
    <location>
        <begin position="40"/>
        <end position="152"/>
    </location>
</feature>
<feature type="sequence variant" id="VAR_012079" description="In dbSNP:rs12759." evidence="7">
    <original>L</original>
    <variation>F</variation>
    <location>
        <position position="319"/>
    </location>
</feature>
<feature type="helix" evidence="20">
    <location>
        <begin position="65"/>
        <end position="73"/>
    </location>
</feature>
<feature type="strand" evidence="20">
    <location>
        <begin position="80"/>
        <end position="84"/>
    </location>
</feature>
<feature type="strand" evidence="20">
    <location>
        <begin position="86"/>
        <end position="88"/>
    </location>
</feature>
<feature type="strand" evidence="20">
    <location>
        <begin position="91"/>
        <end position="97"/>
    </location>
</feature>
<feature type="strand" evidence="20">
    <location>
        <begin position="99"/>
        <end position="109"/>
    </location>
</feature>
<feature type="strand" evidence="20">
    <location>
        <begin position="115"/>
        <end position="119"/>
    </location>
</feature>
<feature type="strand" evidence="20">
    <location>
        <begin position="121"/>
        <end position="124"/>
    </location>
</feature>
<feature type="helix" evidence="20">
    <location>
        <begin position="125"/>
        <end position="134"/>
    </location>
</feature>
<feature type="strand" evidence="20">
    <location>
        <begin position="139"/>
        <end position="141"/>
    </location>
</feature>
<name>GRAP2_HUMAN</name>
<accession>O75791</accession>
<accession>B7Z8I3</accession>
<accession>O43726</accession>
<accession>Q9NRB7</accession>
<evidence type="ECO:0000250" key="1"/>
<evidence type="ECO:0000250" key="2">
    <source>
        <dbReference type="UniProtKB" id="O89100"/>
    </source>
</evidence>
<evidence type="ECO:0000255" key="3">
    <source>
        <dbReference type="PROSITE-ProRule" id="PRU00191"/>
    </source>
</evidence>
<evidence type="ECO:0000255" key="4">
    <source>
        <dbReference type="PROSITE-ProRule" id="PRU00192"/>
    </source>
</evidence>
<evidence type="ECO:0000256" key="5">
    <source>
        <dbReference type="SAM" id="MobiDB-lite"/>
    </source>
</evidence>
<evidence type="ECO:0000269" key="6">
    <source>
    </source>
</evidence>
<evidence type="ECO:0000269" key="7">
    <source>
    </source>
</evidence>
<evidence type="ECO:0000269" key="8">
    <source>
    </source>
</evidence>
<evidence type="ECO:0000269" key="9">
    <source>
    </source>
</evidence>
<evidence type="ECO:0000269" key="10">
    <source>
    </source>
</evidence>
<evidence type="ECO:0000303" key="11">
    <source>
    </source>
</evidence>
<evidence type="ECO:0000305" key="12"/>
<evidence type="ECO:0007744" key="13">
    <source>
    </source>
</evidence>
<evidence type="ECO:0007744" key="14">
    <source>
    </source>
</evidence>
<evidence type="ECO:0007744" key="15">
    <source>
    </source>
</evidence>
<evidence type="ECO:0007744" key="16">
    <source>
    </source>
</evidence>
<evidence type="ECO:0007744" key="17">
    <source>
    </source>
</evidence>
<evidence type="ECO:0007744" key="18">
    <source>
    </source>
</evidence>
<evidence type="ECO:0007744" key="19">
    <source>
    </source>
</evidence>
<evidence type="ECO:0007829" key="20">
    <source>
        <dbReference type="PDB" id="5GJH"/>
    </source>
</evidence>
<protein>
    <recommendedName>
        <fullName>GRB2-related adapter protein 2</fullName>
    </recommendedName>
    <alternativeName>
        <fullName>Adapter protein GRID</fullName>
    </alternativeName>
    <alternativeName>
        <fullName>GRB-2-like protein</fullName>
        <shortName>GRB2L</shortName>
    </alternativeName>
    <alternativeName>
        <fullName>GRBLG</fullName>
    </alternativeName>
    <alternativeName>
        <fullName>GRBX</fullName>
    </alternativeName>
    <alternativeName>
        <fullName>Grf40 adapter protein</fullName>
        <shortName>Grf-40</shortName>
    </alternativeName>
    <alternativeName>
        <fullName>Growth factor receptor-binding protein</fullName>
    </alternativeName>
    <alternativeName>
        <fullName>Hematopoietic cell-associated adapter protein GrpL</fullName>
    </alternativeName>
    <alternativeName>
        <fullName>P38</fullName>
    </alternativeName>
    <alternativeName>
        <fullName>Protein GADS</fullName>
    </alternativeName>
    <alternativeName>
        <fullName>SH3-SH2-SH3 adapter Mona</fullName>
    </alternativeName>
</protein>
<organism>
    <name type="scientific">Homo sapiens</name>
    <name type="common">Human</name>
    <dbReference type="NCBI Taxonomy" id="9606"/>
    <lineage>
        <taxon>Eukaryota</taxon>
        <taxon>Metazoa</taxon>
        <taxon>Chordata</taxon>
        <taxon>Craniata</taxon>
        <taxon>Vertebrata</taxon>
        <taxon>Euteleostomi</taxon>
        <taxon>Mammalia</taxon>
        <taxon>Eutheria</taxon>
        <taxon>Euarchontoglires</taxon>
        <taxon>Primates</taxon>
        <taxon>Haplorrhini</taxon>
        <taxon>Catarrhini</taxon>
        <taxon>Hominidae</taxon>
        <taxon>Homo</taxon>
    </lineage>
</organism>
<gene>
    <name type="primary">GRAP2</name>
    <name type="synonym">GADS</name>
    <name type="synonym">GRB2L</name>
    <name type="synonym">GRID</name>
</gene>
<dbReference type="EMBL" id="AF102694">
    <property type="protein sequence ID" value="AAD04926.1"/>
    <property type="molecule type" value="mRNA"/>
</dbReference>
<dbReference type="EMBL" id="AF129476">
    <property type="protein sequence ID" value="AAD41782.1"/>
    <property type="molecule type" value="mRNA"/>
</dbReference>
<dbReference type="EMBL" id="AF042380">
    <property type="protein sequence ID" value="AAC69273.1"/>
    <property type="molecule type" value="mRNA"/>
</dbReference>
<dbReference type="EMBL" id="AF236119">
    <property type="protein sequence ID" value="AAF60319.1"/>
    <property type="molecule type" value="mRNA"/>
</dbReference>
<dbReference type="EMBL" id="AF236120">
    <property type="protein sequence ID" value="AAF60320.1"/>
    <property type="molecule type" value="mRNA"/>
</dbReference>
<dbReference type="EMBL" id="AF121002">
    <property type="protein sequence ID" value="AAF31758.1"/>
    <property type="molecule type" value="mRNA"/>
</dbReference>
<dbReference type="EMBL" id="AY069959">
    <property type="protein sequence ID" value="AAL58573.1"/>
    <property type="molecule type" value="mRNA"/>
</dbReference>
<dbReference type="EMBL" id="Y18051">
    <property type="protein sequence ID" value="CAA77021.1"/>
    <property type="molecule type" value="mRNA"/>
</dbReference>
<dbReference type="EMBL" id="AJ011736">
    <property type="protein sequence ID" value="CAA09757.1"/>
    <property type="molecule type" value="mRNA"/>
</dbReference>
<dbReference type="EMBL" id="AF090456">
    <property type="protein sequence ID" value="AAD13027.1"/>
    <property type="molecule type" value="mRNA"/>
</dbReference>
<dbReference type="EMBL" id="CR456498">
    <property type="protein sequence ID" value="CAG30384.1"/>
    <property type="molecule type" value="mRNA"/>
</dbReference>
<dbReference type="EMBL" id="AK303470">
    <property type="protein sequence ID" value="BAH13969.1"/>
    <property type="molecule type" value="mRNA"/>
</dbReference>
<dbReference type="EMBL" id="Z82206">
    <property type="status" value="NOT_ANNOTATED_CDS"/>
    <property type="molecule type" value="Genomic_DNA"/>
</dbReference>
<dbReference type="EMBL" id="BC025692">
    <property type="protein sequence ID" value="AAH25692.1"/>
    <property type="molecule type" value="mRNA"/>
</dbReference>
<dbReference type="EMBL" id="BC026002">
    <property type="protein sequence ID" value="AAH26002.1"/>
    <property type="molecule type" value="mRNA"/>
</dbReference>
<dbReference type="CCDS" id="CCDS13999.1">
    <molecule id="O75791-1"/>
</dbReference>
<dbReference type="PIR" id="JE0376">
    <property type="entry name" value="JE0376"/>
</dbReference>
<dbReference type="RefSeq" id="NP_001278753.1">
    <molecule id="O75791-1"/>
    <property type="nucleotide sequence ID" value="NM_001291824.2"/>
</dbReference>
<dbReference type="RefSeq" id="NP_001278754.1">
    <molecule id="O75791-1"/>
    <property type="nucleotide sequence ID" value="NM_001291825.1"/>
</dbReference>
<dbReference type="RefSeq" id="NP_001278757.1">
    <molecule id="O75791-2"/>
    <property type="nucleotide sequence ID" value="NM_001291828.2"/>
</dbReference>
<dbReference type="RefSeq" id="NP_004801.1">
    <molecule id="O75791-1"/>
    <property type="nucleotide sequence ID" value="NM_004810.4"/>
</dbReference>
<dbReference type="RefSeq" id="XP_047297563.1">
    <molecule id="O75791-1"/>
    <property type="nucleotide sequence ID" value="XM_047441607.1"/>
</dbReference>
<dbReference type="RefSeq" id="XP_054182114.1">
    <molecule id="O75791-1"/>
    <property type="nucleotide sequence ID" value="XM_054326139.1"/>
</dbReference>
<dbReference type="PDB" id="5GJH">
    <property type="method" value="X-ray"/>
    <property type="resolution" value="1.20 A"/>
    <property type="chains" value="A/C=58-155"/>
</dbReference>
<dbReference type="PDBsum" id="5GJH"/>
<dbReference type="SMR" id="O75791"/>
<dbReference type="BioGRID" id="114799">
    <property type="interactions" value="98"/>
</dbReference>
<dbReference type="DIP" id="DIP-38435N"/>
<dbReference type="FunCoup" id="O75791">
    <property type="interactions" value="1929"/>
</dbReference>
<dbReference type="IntAct" id="O75791">
    <property type="interactions" value="82"/>
</dbReference>
<dbReference type="MINT" id="O75791"/>
<dbReference type="STRING" id="9606.ENSP00000339186"/>
<dbReference type="iPTMnet" id="O75791"/>
<dbReference type="PhosphoSitePlus" id="O75791"/>
<dbReference type="BioMuta" id="GRAP2"/>
<dbReference type="jPOST" id="O75791"/>
<dbReference type="MassIVE" id="O75791"/>
<dbReference type="PaxDb" id="9606-ENSP00000339186"/>
<dbReference type="PeptideAtlas" id="O75791"/>
<dbReference type="ProteomicsDB" id="50196">
    <molecule id="O75791-1"/>
</dbReference>
<dbReference type="ProteomicsDB" id="6952"/>
<dbReference type="Pumba" id="O75791"/>
<dbReference type="ABCD" id="O75791">
    <property type="antibodies" value="1 sequenced antibody"/>
</dbReference>
<dbReference type="Antibodypedia" id="236">
    <property type="antibodies" value="504 antibodies from 37 providers"/>
</dbReference>
<dbReference type="DNASU" id="9402"/>
<dbReference type="Ensembl" id="ENST00000344138.9">
    <molecule id="O75791-1"/>
    <property type="protein sequence ID" value="ENSP00000339186.4"/>
    <property type="gene ID" value="ENSG00000100351.17"/>
</dbReference>
<dbReference type="Ensembl" id="ENST00000407075.3">
    <molecule id="O75791-1"/>
    <property type="protein sequence ID" value="ENSP00000385607.3"/>
    <property type="gene ID" value="ENSG00000100351.17"/>
</dbReference>
<dbReference type="GeneID" id="9402"/>
<dbReference type="KEGG" id="hsa:9402"/>
<dbReference type="MANE-Select" id="ENST00000344138.9">
    <property type="protein sequence ID" value="ENSP00000339186.4"/>
    <property type="RefSeq nucleotide sequence ID" value="NM_004810.4"/>
    <property type="RefSeq protein sequence ID" value="NP_004801.1"/>
</dbReference>
<dbReference type="AGR" id="HGNC:4563"/>
<dbReference type="CTD" id="9402"/>
<dbReference type="DisGeNET" id="9402"/>
<dbReference type="GeneCards" id="GRAP2"/>
<dbReference type="HGNC" id="HGNC:4563">
    <property type="gene designation" value="GRAP2"/>
</dbReference>
<dbReference type="HPA" id="ENSG00000100351">
    <property type="expression patterns" value="Tissue enriched (lymphoid)"/>
</dbReference>
<dbReference type="MIM" id="604518">
    <property type="type" value="gene"/>
</dbReference>
<dbReference type="neXtProt" id="NX_O75791"/>
<dbReference type="OpenTargets" id="ENSG00000100351"/>
<dbReference type="PharmGKB" id="PA28959"/>
<dbReference type="VEuPathDB" id="HostDB:ENSG00000100351"/>
<dbReference type="eggNOG" id="KOG3601">
    <property type="taxonomic scope" value="Eukaryota"/>
</dbReference>
<dbReference type="GeneTree" id="ENSGT00940000157307"/>
<dbReference type="HOGENOM" id="CLU_073617_0_0_1"/>
<dbReference type="InParanoid" id="O75791"/>
<dbReference type="OMA" id="VAKFDFM"/>
<dbReference type="OrthoDB" id="10255964at2759"/>
<dbReference type="PAN-GO" id="O75791">
    <property type="GO annotations" value="6 GO annotations based on evolutionary models"/>
</dbReference>
<dbReference type="PhylomeDB" id="O75791"/>
<dbReference type="TreeFam" id="TF354288"/>
<dbReference type="PathwayCommons" id="O75791"/>
<dbReference type="Reactome" id="R-HSA-1433557">
    <property type="pathway name" value="Signaling by SCF-KIT"/>
</dbReference>
<dbReference type="Reactome" id="R-HSA-202433">
    <property type="pathway name" value="Generation of second messenger molecules"/>
</dbReference>
<dbReference type="Reactome" id="R-HSA-2424491">
    <property type="pathway name" value="DAP12 signaling"/>
</dbReference>
<dbReference type="Reactome" id="R-HSA-2871796">
    <property type="pathway name" value="FCERI mediated MAPK activation"/>
</dbReference>
<dbReference type="Reactome" id="R-HSA-2871809">
    <property type="pathway name" value="FCERI mediated Ca+2 mobilization"/>
</dbReference>
<dbReference type="Reactome" id="R-HSA-389356">
    <property type="pathway name" value="Co-stimulation by CD28"/>
</dbReference>
<dbReference type="Reactome" id="R-HSA-9607240">
    <property type="pathway name" value="FLT3 Signaling"/>
</dbReference>
<dbReference type="Reactome" id="R-HSA-9680350">
    <property type="pathway name" value="Signaling by CSF1 (M-CSF) in myeloid cells"/>
</dbReference>
<dbReference type="SignaLink" id="O75791"/>
<dbReference type="BioGRID-ORCS" id="9402">
    <property type="hits" value="12 hits in 1153 CRISPR screens"/>
</dbReference>
<dbReference type="CD-CODE" id="1070A586">
    <property type="entry name" value="Synthetic Condensate 000045"/>
</dbReference>
<dbReference type="CD-CODE" id="C05F05FE">
    <property type="entry name" value="Synthetic Condensate 000079"/>
</dbReference>
<dbReference type="CD-CODE" id="F345034F">
    <property type="entry name" value="Signaling cluster"/>
</dbReference>
<dbReference type="ChiTaRS" id="GRAP2">
    <property type="organism name" value="human"/>
</dbReference>
<dbReference type="GeneWiki" id="GRAP2"/>
<dbReference type="GenomeRNAi" id="9402"/>
<dbReference type="Pharos" id="O75791">
    <property type="development level" value="Tbio"/>
</dbReference>
<dbReference type="PRO" id="PR:O75791"/>
<dbReference type="Proteomes" id="UP000005640">
    <property type="component" value="Chromosome 22"/>
</dbReference>
<dbReference type="RNAct" id="O75791">
    <property type="molecule type" value="protein"/>
</dbReference>
<dbReference type="Bgee" id="ENSG00000100351">
    <property type="expression patterns" value="Expressed in monocyte and 98 other cell types or tissues"/>
</dbReference>
<dbReference type="ExpressionAtlas" id="O75791">
    <property type="expression patterns" value="baseline and differential"/>
</dbReference>
<dbReference type="GO" id="GO:0005737">
    <property type="term" value="C:cytoplasm"/>
    <property type="evidence" value="ECO:0000314"/>
    <property type="project" value="UniProtKB"/>
</dbReference>
<dbReference type="GO" id="GO:0005829">
    <property type="term" value="C:cytosol"/>
    <property type="evidence" value="ECO:0000314"/>
    <property type="project" value="HPA"/>
</dbReference>
<dbReference type="GO" id="GO:0005768">
    <property type="term" value="C:endosome"/>
    <property type="evidence" value="ECO:0000314"/>
    <property type="project" value="UniProtKB"/>
</dbReference>
<dbReference type="GO" id="GO:0005654">
    <property type="term" value="C:nucleoplasm"/>
    <property type="evidence" value="ECO:0000314"/>
    <property type="project" value="HPA"/>
</dbReference>
<dbReference type="GO" id="GO:0005634">
    <property type="term" value="C:nucleus"/>
    <property type="evidence" value="ECO:0000314"/>
    <property type="project" value="UniProtKB"/>
</dbReference>
<dbReference type="GO" id="GO:0005886">
    <property type="term" value="C:plasma membrane"/>
    <property type="evidence" value="ECO:0000314"/>
    <property type="project" value="HPA"/>
</dbReference>
<dbReference type="GO" id="GO:0001784">
    <property type="term" value="F:phosphotyrosine residue binding"/>
    <property type="evidence" value="ECO:0000318"/>
    <property type="project" value="GO_Central"/>
</dbReference>
<dbReference type="GO" id="GO:0007267">
    <property type="term" value="P:cell-cell signaling"/>
    <property type="evidence" value="ECO:0000304"/>
    <property type="project" value="ProtInc"/>
</dbReference>
<dbReference type="GO" id="GO:0007265">
    <property type="term" value="P:Ras protein signal transduction"/>
    <property type="evidence" value="ECO:0000304"/>
    <property type="project" value="ProtInc"/>
</dbReference>
<dbReference type="GO" id="GO:0043408">
    <property type="term" value="P:regulation of MAPK cascade"/>
    <property type="evidence" value="ECO:0000318"/>
    <property type="project" value="GO_Central"/>
</dbReference>
<dbReference type="GO" id="GO:0007165">
    <property type="term" value="P:signal transduction"/>
    <property type="evidence" value="ECO:0000318"/>
    <property type="project" value="GO_Central"/>
</dbReference>
<dbReference type="CDD" id="cd09941">
    <property type="entry name" value="SH2_Grb2_like"/>
    <property type="match status" value="1"/>
</dbReference>
<dbReference type="CDD" id="cd11950">
    <property type="entry name" value="SH3_GRAP2_C"/>
    <property type="match status" value="1"/>
</dbReference>
<dbReference type="CDD" id="cd11947">
    <property type="entry name" value="SH3_GRAP2_N"/>
    <property type="match status" value="1"/>
</dbReference>
<dbReference type="FunFam" id="2.30.30.40:FF:000181">
    <property type="entry name" value="GRB2-related adapter protein 2"/>
    <property type="match status" value="1"/>
</dbReference>
<dbReference type="FunFam" id="3.30.505.10:FF:000070">
    <property type="entry name" value="GRB2-related adapter protein 2"/>
    <property type="match status" value="1"/>
</dbReference>
<dbReference type="FunFam" id="2.30.30.40:FF:000206">
    <property type="entry name" value="GRB2-related adapter protein 2 isoform X1"/>
    <property type="match status" value="1"/>
</dbReference>
<dbReference type="Gene3D" id="3.30.505.10">
    <property type="entry name" value="SH2 domain"/>
    <property type="match status" value="1"/>
</dbReference>
<dbReference type="Gene3D" id="2.30.30.40">
    <property type="entry name" value="SH3 Domains"/>
    <property type="match status" value="2"/>
</dbReference>
<dbReference type="InterPro" id="IPR035646">
    <property type="entry name" value="GRAP2_C_SH3"/>
</dbReference>
<dbReference type="InterPro" id="IPR043539">
    <property type="entry name" value="Grb2-like"/>
</dbReference>
<dbReference type="InterPro" id="IPR000980">
    <property type="entry name" value="SH2"/>
</dbReference>
<dbReference type="InterPro" id="IPR036860">
    <property type="entry name" value="SH2_dom_sf"/>
</dbReference>
<dbReference type="InterPro" id="IPR036028">
    <property type="entry name" value="SH3-like_dom_sf"/>
</dbReference>
<dbReference type="InterPro" id="IPR001452">
    <property type="entry name" value="SH3_domain"/>
</dbReference>
<dbReference type="PANTHER" id="PTHR46037">
    <property type="entry name" value="PROTEIN ENHANCER OF SEVENLESS 2B"/>
    <property type="match status" value="1"/>
</dbReference>
<dbReference type="Pfam" id="PF00017">
    <property type="entry name" value="SH2"/>
    <property type="match status" value="1"/>
</dbReference>
<dbReference type="Pfam" id="PF00018">
    <property type="entry name" value="SH3_1"/>
    <property type="match status" value="2"/>
</dbReference>
<dbReference type="PRINTS" id="PR00401">
    <property type="entry name" value="SH2DOMAIN"/>
</dbReference>
<dbReference type="PRINTS" id="PR00452">
    <property type="entry name" value="SH3DOMAIN"/>
</dbReference>
<dbReference type="SMART" id="SM00252">
    <property type="entry name" value="SH2"/>
    <property type="match status" value="1"/>
</dbReference>
<dbReference type="SMART" id="SM00326">
    <property type="entry name" value="SH3"/>
    <property type="match status" value="2"/>
</dbReference>
<dbReference type="SUPFAM" id="SSF55550">
    <property type="entry name" value="SH2 domain"/>
    <property type="match status" value="1"/>
</dbReference>
<dbReference type="SUPFAM" id="SSF50044">
    <property type="entry name" value="SH3-domain"/>
    <property type="match status" value="2"/>
</dbReference>
<dbReference type="PROSITE" id="PS50001">
    <property type="entry name" value="SH2"/>
    <property type="match status" value="1"/>
</dbReference>
<dbReference type="PROSITE" id="PS50002">
    <property type="entry name" value="SH3"/>
    <property type="match status" value="2"/>
</dbReference>